<dbReference type="EMBL" id="AF482383">
    <property type="protein sequence ID" value="AAL91489.1"/>
    <property type="molecule type" value="Genomic_DNA"/>
</dbReference>
<dbReference type="EMBL" id="AAFI02000148">
    <property type="protein sequence ID" value="EAL62540.1"/>
    <property type="molecule type" value="Genomic_DNA"/>
</dbReference>
<dbReference type="RefSeq" id="XP_636043.1">
    <property type="nucleotide sequence ID" value="XM_630951.1"/>
</dbReference>
<dbReference type="SMR" id="Q8T689"/>
<dbReference type="FunCoup" id="Q8T689">
    <property type="interactions" value="5"/>
</dbReference>
<dbReference type="STRING" id="44689.Q8T689"/>
<dbReference type="PaxDb" id="44689-DDB0216252"/>
<dbReference type="EnsemblProtists" id="EAL62540">
    <property type="protein sequence ID" value="EAL62540"/>
    <property type="gene ID" value="DDB_G0289657"/>
</dbReference>
<dbReference type="GeneID" id="8627253"/>
<dbReference type="KEGG" id="ddi:DDB_G0289657"/>
<dbReference type="dictyBase" id="DDB_G0289657">
    <property type="gene designation" value="abcG4"/>
</dbReference>
<dbReference type="VEuPathDB" id="AmoebaDB:DDB_G0289657"/>
<dbReference type="eggNOG" id="KOG0061">
    <property type="taxonomic scope" value="Eukaryota"/>
</dbReference>
<dbReference type="HOGENOM" id="CLU_000604_57_8_1"/>
<dbReference type="InParanoid" id="Q8T689"/>
<dbReference type="OMA" id="MPRHLTY"/>
<dbReference type="PhylomeDB" id="Q8T689"/>
<dbReference type="Reactome" id="R-DDI-1369062">
    <property type="pathway name" value="ABC transporters in lipid homeostasis"/>
</dbReference>
<dbReference type="Reactome" id="R-DDI-1660661">
    <property type="pathway name" value="Sphingolipid de novo biosynthesis"/>
</dbReference>
<dbReference type="Reactome" id="R-DDI-189451">
    <property type="pathway name" value="Heme biosynthesis"/>
</dbReference>
<dbReference type="Reactome" id="R-DDI-189483">
    <property type="pathway name" value="Heme degradation"/>
</dbReference>
<dbReference type="Reactome" id="R-DDI-917937">
    <property type="pathway name" value="Iron uptake and transport"/>
</dbReference>
<dbReference type="Reactome" id="R-DDI-9753281">
    <property type="pathway name" value="Paracetamol ADME"/>
</dbReference>
<dbReference type="Reactome" id="R-DDI-9793528">
    <property type="pathway name" value="Ciprofloxacin ADME"/>
</dbReference>
<dbReference type="PRO" id="PR:Q8T689"/>
<dbReference type="Proteomes" id="UP000002195">
    <property type="component" value="Chromosome 5"/>
</dbReference>
<dbReference type="GO" id="GO:0043190">
    <property type="term" value="C:ATP-binding cassette (ABC) transporter complex"/>
    <property type="evidence" value="ECO:0000317"/>
    <property type="project" value="dictyBase"/>
</dbReference>
<dbReference type="GO" id="GO:0016020">
    <property type="term" value="C:membrane"/>
    <property type="evidence" value="ECO:0000318"/>
    <property type="project" value="GO_Central"/>
</dbReference>
<dbReference type="GO" id="GO:0140359">
    <property type="term" value="F:ABC-type transporter activity"/>
    <property type="evidence" value="ECO:0007669"/>
    <property type="project" value="InterPro"/>
</dbReference>
<dbReference type="GO" id="GO:0005524">
    <property type="term" value="F:ATP binding"/>
    <property type="evidence" value="ECO:0007669"/>
    <property type="project" value="UniProtKB-KW"/>
</dbReference>
<dbReference type="GO" id="GO:0016887">
    <property type="term" value="F:ATP hydrolysis activity"/>
    <property type="evidence" value="ECO:0007669"/>
    <property type="project" value="InterPro"/>
</dbReference>
<dbReference type="GO" id="GO:0042626">
    <property type="term" value="F:ATPase-coupled transmembrane transporter activity"/>
    <property type="evidence" value="ECO:0000318"/>
    <property type="project" value="GO_Central"/>
</dbReference>
<dbReference type="GO" id="GO:0030587">
    <property type="term" value="P:sorocarp development"/>
    <property type="evidence" value="ECO:0007669"/>
    <property type="project" value="UniProtKB-ARBA"/>
</dbReference>
<dbReference type="GO" id="GO:0055085">
    <property type="term" value="P:transmembrane transport"/>
    <property type="evidence" value="ECO:0000318"/>
    <property type="project" value="GO_Central"/>
</dbReference>
<dbReference type="CDD" id="cd03213">
    <property type="entry name" value="ABCG_EPDR"/>
    <property type="match status" value="1"/>
</dbReference>
<dbReference type="FunFam" id="3.40.50.300:FF:002300">
    <property type="entry name" value="ABC transporter G family protein"/>
    <property type="match status" value="1"/>
</dbReference>
<dbReference type="Gene3D" id="3.40.50.300">
    <property type="entry name" value="P-loop containing nucleotide triphosphate hydrolases"/>
    <property type="match status" value="1"/>
</dbReference>
<dbReference type="InterPro" id="IPR003593">
    <property type="entry name" value="AAA+_ATPase"/>
</dbReference>
<dbReference type="InterPro" id="IPR013525">
    <property type="entry name" value="ABC2_TM"/>
</dbReference>
<dbReference type="InterPro" id="IPR003439">
    <property type="entry name" value="ABC_transporter-like_ATP-bd"/>
</dbReference>
<dbReference type="InterPro" id="IPR017871">
    <property type="entry name" value="ABC_transporter-like_CS"/>
</dbReference>
<dbReference type="InterPro" id="IPR050352">
    <property type="entry name" value="ABCG_transporters"/>
</dbReference>
<dbReference type="InterPro" id="IPR027417">
    <property type="entry name" value="P-loop_NTPase"/>
</dbReference>
<dbReference type="PANTHER" id="PTHR48041">
    <property type="entry name" value="ABC TRANSPORTER G FAMILY MEMBER 28"/>
    <property type="match status" value="1"/>
</dbReference>
<dbReference type="PANTHER" id="PTHR48041:SF65">
    <property type="entry name" value="ABC TRANSPORTER G FAMILY MEMBER 4"/>
    <property type="match status" value="1"/>
</dbReference>
<dbReference type="Pfam" id="PF01061">
    <property type="entry name" value="ABC2_membrane"/>
    <property type="match status" value="1"/>
</dbReference>
<dbReference type="Pfam" id="PF00005">
    <property type="entry name" value="ABC_tran"/>
    <property type="match status" value="1"/>
</dbReference>
<dbReference type="SMART" id="SM00382">
    <property type="entry name" value="AAA"/>
    <property type="match status" value="1"/>
</dbReference>
<dbReference type="SUPFAM" id="SSF81995">
    <property type="entry name" value="beta-sandwich domain of Sec23/24"/>
    <property type="match status" value="1"/>
</dbReference>
<dbReference type="SUPFAM" id="SSF52540">
    <property type="entry name" value="P-loop containing nucleoside triphosphate hydrolases"/>
    <property type="match status" value="1"/>
</dbReference>
<dbReference type="PROSITE" id="PS00211">
    <property type="entry name" value="ABC_TRANSPORTER_1"/>
    <property type="match status" value="1"/>
</dbReference>
<dbReference type="PROSITE" id="PS50893">
    <property type="entry name" value="ABC_TRANSPORTER_2"/>
    <property type="match status" value="1"/>
</dbReference>
<feature type="chain" id="PRO_0000391393" description="ABC transporter G family member 4">
    <location>
        <begin position="1"/>
        <end position="798"/>
    </location>
</feature>
<feature type="transmembrane region" description="Helical" evidence="1">
    <location>
        <begin position="540"/>
        <end position="560"/>
    </location>
</feature>
<feature type="transmembrane region" description="Helical" evidence="1">
    <location>
        <begin position="579"/>
        <end position="599"/>
    </location>
</feature>
<feature type="transmembrane region" description="Helical" evidence="1">
    <location>
        <begin position="628"/>
        <end position="648"/>
    </location>
</feature>
<feature type="transmembrane region" description="Helical" evidence="1">
    <location>
        <begin position="656"/>
        <end position="676"/>
    </location>
</feature>
<feature type="transmembrane region" description="Helical" evidence="1">
    <location>
        <begin position="687"/>
        <end position="707"/>
    </location>
</feature>
<feature type="transmembrane region" description="Helical" evidence="1">
    <location>
        <begin position="713"/>
        <end position="733"/>
    </location>
</feature>
<feature type="transmembrane region" description="Helical" evidence="1">
    <location>
        <begin position="771"/>
        <end position="791"/>
    </location>
</feature>
<feature type="domain" description="ABC transporter" evidence="2">
    <location>
        <begin position="211"/>
        <end position="464"/>
    </location>
</feature>
<feature type="domain" description="ABC transmembrane type-2">
    <location>
        <begin position="540"/>
        <end position="793"/>
    </location>
</feature>
<feature type="region of interest" description="Disordered" evidence="3">
    <location>
        <begin position="1"/>
        <end position="51"/>
    </location>
</feature>
<feature type="coiled-coil region" evidence="1">
    <location>
        <begin position="34"/>
        <end position="83"/>
    </location>
</feature>
<feature type="compositionally biased region" description="Basic and acidic residues" evidence="3">
    <location>
        <begin position="12"/>
        <end position="29"/>
    </location>
</feature>
<feature type="compositionally biased region" description="Polar residues" evidence="3">
    <location>
        <begin position="30"/>
        <end position="41"/>
    </location>
</feature>
<feature type="compositionally biased region" description="Low complexity" evidence="3">
    <location>
        <begin position="42"/>
        <end position="51"/>
    </location>
</feature>
<feature type="binding site" evidence="2">
    <location>
        <begin position="253"/>
        <end position="260"/>
    </location>
    <ligand>
        <name>ATP</name>
        <dbReference type="ChEBI" id="CHEBI:30616"/>
    </ligand>
</feature>
<sequence>MEDIGNNNFEIIDDKSDEKNDENFEDKNSRNNINEEQILSNQQQQQQQQQQQQQQQQQQQQQQQQQQQQQQEQQQFKNEVINTLHPKQPNNEYSLSSLSLSPQTPQINLSEKLISDNSNLNSNSNNNNKDIESGIQTKIKNIENRRNSINSDSSGTFNNEITNGRSNDNEIININNNVGVQVTFENICYKVLNKKYNEQKKIIKKLESGKIDIEDIESQVNKLPIDRIIEKELTILSNVSGIVEKGEMVALMGPSGSGKSTLLDILANRKSTGTITGKILVNGKEIGEAYKMFCSYVTQEEVFLETSTVYETLKFHADLRLPDMTDTEKDIRIKQVLKDVGLDRKLNSKIGGILPGGMIVKGLSGGEKKRVSIGCALVTNPSLLFLDEPTSGLDSLNSLKVMKVLLELTKMKGVTVVCSVHQPRPEIFYLFSNIMVVLKGRMVYSGSNILEYLSSIDSNYKCPPQMNPADFILDVCDEIVNNPSQYSTTVDTWEKYWKHEIQPTISNDPINIDIPKRVGFIYQYWVCQKRSYQSFVRNRVVFFSKIVIAILIGLLFSACFGTVGYDGLDQNEAQSVSALFFFIITSLNLLPYSSISTFVSIRTLFNSERASKIYHPFPYFIGSMLIEIVSSFFVVLIITTIIYCIVHLRWSFEAYILSLISFYMVFLASVFMVIAMSNIAGTVDLTFSYCTGVSVVLVLFSGFLVPINSLPDSFGWIHHIDYLFYGFSSIVIIQYRDFEFQCPQPPIPCLYSNGNNLIEFLGLKNWEYNKSIGILTIWIAFFYILAYIGLYKFNKEKR</sequence>
<keyword id="KW-0067">ATP-binding</keyword>
<keyword id="KW-0175">Coiled coil</keyword>
<keyword id="KW-0472">Membrane</keyword>
<keyword id="KW-0547">Nucleotide-binding</keyword>
<keyword id="KW-1185">Reference proteome</keyword>
<keyword id="KW-0812">Transmembrane</keyword>
<keyword id="KW-1133">Transmembrane helix</keyword>
<keyword id="KW-0813">Transport</keyword>
<evidence type="ECO:0000255" key="1"/>
<evidence type="ECO:0000255" key="2">
    <source>
        <dbReference type="PROSITE-ProRule" id="PRU00434"/>
    </source>
</evidence>
<evidence type="ECO:0000256" key="3">
    <source>
        <dbReference type="SAM" id="MobiDB-lite"/>
    </source>
</evidence>
<evidence type="ECO:0000305" key="4"/>
<organism>
    <name type="scientific">Dictyostelium discoideum</name>
    <name type="common">Social amoeba</name>
    <dbReference type="NCBI Taxonomy" id="44689"/>
    <lineage>
        <taxon>Eukaryota</taxon>
        <taxon>Amoebozoa</taxon>
        <taxon>Evosea</taxon>
        <taxon>Eumycetozoa</taxon>
        <taxon>Dictyostelia</taxon>
        <taxon>Dictyosteliales</taxon>
        <taxon>Dictyosteliaceae</taxon>
        <taxon>Dictyostelium</taxon>
    </lineage>
</organism>
<reference key="1">
    <citation type="journal article" date="2002" name="Eukaryot. Cell">
        <title>Evolutionary analyses of ABC transporters of Dictyostelium discoideum.</title>
        <authorList>
            <person name="Anjard C."/>
            <person name="Loomis W.F."/>
        </authorList>
    </citation>
    <scope>NUCLEOTIDE SEQUENCE [GENOMIC DNA]</scope>
    <scope>NOMENCLATURE</scope>
    <source>
        <strain>AX4</strain>
    </source>
</reference>
<reference key="2">
    <citation type="journal article" date="2005" name="Nature">
        <title>The genome of the social amoeba Dictyostelium discoideum.</title>
        <authorList>
            <person name="Eichinger L."/>
            <person name="Pachebat J.A."/>
            <person name="Gloeckner G."/>
            <person name="Rajandream M.A."/>
            <person name="Sucgang R."/>
            <person name="Berriman M."/>
            <person name="Song J."/>
            <person name="Olsen R."/>
            <person name="Szafranski K."/>
            <person name="Xu Q."/>
            <person name="Tunggal B."/>
            <person name="Kummerfeld S."/>
            <person name="Madera M."/>
            <person name="Konfortov B.A."/>
            <person name="Rivero F."/>
            <person name="Bankier A.T."/>
            <person name="Lehmann R."/>
            <person name="Hamlin N."/>
            <person name="Davies R."/>
            <person name="Gaudet P."/>
            <person name="Fey P."/>
            <person name="Pilcher K."/>
            <person name="Chen G."/>
            <person name="Saunders D."/>
            <person name="Sodergren E.J."/>
            <person name="Davis P."/>
            <person name="Kerhornou A."/>
            <person name="Nie X."/>
            <person name="Hall N."/>
            <person name="Anjard C."/>
            <person name="Hemphill L."/>
            <person name="Bason N."/>
            <person name="Farbrother P."/>
            <person name="Desany B."/>
            <person name="Just E."/>
            <person name="Morio T."/>
            <person name="Rost R."/>
            <person name="Churcher C.M."/>
            <person name="Cooper J."/>
            <person name="Haydock S."/>
            <person name="van Driessche N."/>
            <person name="Cronin A."/>
            <person name="Goodhead I."/>
            <person name="Muzny D.M."/>
            <person name="Mourier T."/>
            <person name="Pain A."/>
            <person name="Lu M."/>
            <person name="Harper D."/>
            <person name="Lindsay R."/>
            <person name="Hauser H."/>
            <person name="James K.D."/>
            <person name="Quiles M."/>
            <person name="Madan Babu M."/>
            <person name="Saito T."/>
            <person name="Buchrieser C."/>
            <person name="Wardroper A."/>
            <person name="Felder M."/>
            <person name="Thangavelu M."/>
            <person name="Johnson D."/>
            <person name="Knights A."/>
            <person name="Loulseged H."/>
            <person name="Mungall K.L."/>
            <person name="Oliver K."/>
            <person name="Price C."/>
            <person name="Quail M.A."/>
            <person name="Urushihara H."/>
            <person name="Hernandez J."/>
            <person name="Rabbinowitsch E."/>
            <person name="Steffen D."/>
            <person name="Sanders M."/>
            <person name="Ma J."/>
            <person name="Kohara Y."/>
            <person name="Sharp S."/>
            <person name="Simmonds M.N."/>
            <person name="Spiegler S."/>
            <person name="Tivey A."/>
            <person name="Sugano S."/>
            <person name="White B."/>
            <person name="Walker D."/>
            <person name="Woodward J.R."/>
            <person name="Winckler T."/>
            <person name="Tanaka Y."/>
            <person name="Shaulsky G."/>
            <person name="Schleicher M."/>
            <person name="Weinstock G.M."/>
            <person name="Rosenthal A."/>
            <person name="Cox E.C."/>
            <person name="Chisholm R.L."/>
            <person name="Gibbs R.A."/>
            <person name="Loomis W.F."/>
            <person name="Platzer M."/>
            <person name="Kay R.R."/>
            <person name="Williams J.G."/>
            <person name="Dear P.H."/>
            <person name="Noegel A.A."/>
            <person name="Barrell B.G."/>
            <person name="Kuspa A."/>
        </authorList>
    </citation>
    <scope>NUCLEOTIDE SEQUENCE [LARGE SCALE GENOMIC DNA]</scope>
    <source>
        <strain>AX4</strain>
    </source>
</reference>
<name>ABCG4_DICDI</name>
<accession>Q8T689</accession>
<accession>Q54H75</accession>
<gene>
    <name type="primary">abcG4</name>
    <name type="ORF">DDB_G0289657</name>
</gene>
<proteinExistence type="inferred from homology"/>
<protein>
    <recommendedName>
        <fullName>ABC transporter G family member 4</fullName>
    </recommendedName>
    <alternativeName>
        <fullName>ABC transporter ABCG.4</fullName>
    </alternativeName>
</protein>
<comment type="subcellular location">
    <subcellularLocation>
        <location evidence="4">Membrane</location>
        <topology evidence="4">Multi-pass membrane protein</topology>
    </subcellularLocation>
</comment>
<comment type="similarity">
    <text evidence="4">Belongs to the ABC transporter superfamily. ABCG family. Eye pigment precursor importer (TC 3.A.1.204) subfamily.</text>
</comment>